<comment type="function">
    <text evidence="1">Catalyzes the conversion of dihydroorotate to orotate with quinone as electron acceptor.</text>
</comment>
<comment type="catalytic activity">
    <reaction evidence="1">
        <text>(S)-dihydroorotate + a quinone = orotate + a quinol</text>
        <dbReference type="Rhea" id="RHEA:30187"/>
        <dbReference type="ChEBI" id="CHEBI:24646"/>
        <dbReference type="ChEBI" id="CHEBI:30839"/>
        <dbReference type="ChEBI" id="CHEBI:30864"/>
        <dbReference type="ChEBI" id="CHEBI:132124"/>
        <dbReference type="EC" id="1.3.5.2"/>
    </reaction>
</comment>
<comment type="cofactor">
    <cofactor evidence="1">
        <name>FMN</name>
        <dbReference type="ChEBI" id="CHEBI:58210"/>
    </cofactor>
    <text evidence="1">Binds 1 FMN per subunit.</text>
</comment>
<comment type="pathway">
    <text evidence="1">Pyrimidine metabolism; UMP biosynthesis via de novo pathway; orotate from (S)-dihydroorotate (quinone route): step 1/1.</text>
</comment>
<comment type="subunit">
    <text evidence="1">Monomer.</text>
</comment>
<comment type="subcellular location">
    <subcellularLocation>
        <location evidence="1">Cell membrane</location>
        <topology evidence="1">Peripheral membrane protein</topology>
    </subcellularLocation>
</comment>
<comment type="similarity">
    <text evidence="1">Belongs to the dihydroorotate dehydrogenase family. Type 2 subfamily.</text>
</comment>
<gene>
    <name evidence="1" type="primary">pyrD</name>
    <name type="ordered locus">STY1079</name>
    <name type="ordered locus">t1862</name>
</gene>
<proteinExistence type="inferred from homology"/>
<reference key="1">
    <citation type="journal article" date="2001" name="Nature">
        <title>Complete genome sequence of a multiple drug resistant Salmonella enterica serovar Typhi CT18.</title>
        <authorList>
            <person name="Parkhill J."/>
            <person name="Dougan G."/>
            <person name="James K.D."/>
            <person name="Thomson N.R."/>
            <person name="Pickard D."/>
            <person name="Wain J."/>
            <person name="Churcher C.M."/>
            <person name="Mungall K.L."/>
            <person name="Bentley S.D."/>
            <person name="Holden M.T.G."/>
            <person name="Sebaihia M."/>
            <person name="Baker S."/>
            <person name="Basham D."/>
            <person name="Brooks K."/>
            <person name="Chillingworth T."/>
            <person name="Connerton P."/>
            <person name="Cronin A."/>
            <person name="Davis P."/>
            <person name="Davies R.M."/>
            <person name="Dowd L."/>
            <person name="White N."/>
            <person name="Farrar J."/>
            <person name="Feltwell T."/>
            <person name="Hamlin N."/>
            <person name="Haque A."/>
            <person name="Hien T.T."/>
            <person name="Holroyd S."/>
            <person name="Jagels K."/>
            <person name="Krogh A."/>
            <person name="Larsen T.S."/>
            <person name="Leather S."/>
            <person name="Moule S."/>
            <person name="O'Gaora P."/>
            <person name="Parry C."/>
            <person name="Quail M.A."/>
            <person name="Rutherford K.M."/>
            <person name="Simmonds M."/>
            <person name="Skelton J."/>
            <person name="Stevens K."/>
            <person name="Whitehead S."/>
            <person name="Barrell B.G."/>
        </authorList>
    </citation>
    <scope>NUCLEOTIDE SEQUENCE [LARGE SCALE GENOMIC DNA]</scope>
    <source>
        <strain>CT18</strain>
    </source>
</reference>
<reference key="2">
    <citation type="journal article" date="2003" name="J. Bacteriol.">
        <title>Comparative genomics of Salmonella enterica serovar Typhi strains Ty2 and CT18.</title>
        <authorList>
            <person name="Deng W."/>
            <person name="Liou S.-R."/>
            <person name="Plunkett G. III"/>
            <person name="Mayhew G.F."/>
            <person name="Rose D.J."/>
            <person name="Burland V."/>
            <person name="Kodoyianni V."/>
            <person name="Schwartz D.C."/>
            <person name="Blattner F.R."/>
        </authorList>
    </citation>
    <scope>NUCLEOTIDE SEQUENCE [LARGE SCALE GENOMIC DNA]</scope>
    <source>
        <strain>ATCC 700931 / Ty2</strain>
    </source>
</reference>
<protein>
    <recommendedName>
        <fullName evidence="1">Dihydroorotate dehydrogenase (quinone)</fullName>
        <ecNumber evidence="1">1.3.5.2</ecNumber>
    </recommendedName>
    <alternativeName>
        <fullName evidence="1">DHOdehase</fullName>
        <shortName evidence="1">DHOD</shortName>
        <shortName evidence="1">DHODase</shortName>
    </alternativeName>
    <alternativeName>
        <fullName evidence="1">Dihydroorotate oxidase</fullName>
    </alternativeName>
</protein>
<accession>Q8Z7S9</accession>
<organism>
    <name type="scientific">Salmonella typhi</name>
    <dbReference type="NCBI Taxonomy" id="90370"/>
    <lineage>
        <taxon>Bacteria</taxon>
        <taxon>Pseudomonadati</taxon>
        <taxon>Pseudomonadota</taxon>
        <taxon>Gammaproteobacteria</taxon>
        <taxon>Enterobacterales</taxon>
        <taxon>Enterobacteriaceae</taxon>
        <taxon>Salmonella</taxon>
    </lineage>
</organism>
<sequence length="336" mass="36753">MYYPFVRKALFQLDPERAHEFTFQQLRRITGTPLEALVRQKVPTKPVTCMGLTFKNPLGLAAGLDKDGECIDALGAMGFGSLEIGTVTPRPQPGNDKPRLFRLVDAEGLINRMGFNNLGVDNLVENVKKAHFDGILGINIGKNKDTPVENGKDDYLICMEKVYAYAGYIAINISSPNTPGLRTLQYGDALDDLLTAIKNKQNDLQVIHHKYVPVAVKIAPDLCEEELIQVADSLLRHNIDGVIATNTTLDRSLVQGMKNCQQTGGLSGRPLQLKSTEIIRRLSLELKGQLPIIGVGGIDSVIAAREKIAAGATLVQIYSGFIFKGPPLIKEIVTHI</sequence>
<keyword id="KW-1003">Cell membrane</keyword>
<keyword id="KW-0285">Flavoprotein</keyword>
<keyword id="KW-0288">FMN</keyword>
<keyword id="KW-0472">Membrane</keyword>
<keyword id="KW-0560">Oxidoreductase</keyword>
<keyword id="KW-0665">Pyrimidine biosynthesis</keyword>
<evidence type="ECO:0000255" key="1">
    <source>
        <dbReference type="HAMAP-Rule" id="MF_00225"/>
    </source>
</evidence>
<feature type="chain" id="PRO_0000148473" description="Dihydroorotate dehydrogenase (quinone)">
    <location>
        <begin position="1"/>
        <end position="336"/>
    </location>
</feature>
<feature type="active site" description="Nucleophile" evidence="1">
    <location>
        <position position="175"/>
    </location>
</feature>
<feature type="binding site" evidence="1">
    <location>
        <begin position="62"/>
        <end position="66"/>
    </location>
    <ligand>
        <name>FMN</name>
        <dbReference type="ChEBI" id="CHEBI:58210"/>
    </ligand>
</feature>
<feature type="binding site" evidence="1">
    <location>
        <position position="66"/>
    </location>
    <ligand>
        <name>substrate</name>
    </ligand>
</feature>
<feature type="binding site" evidence="1">
    <location>
        <position position="86"/>
    </location>
    <ligand>
        <name>FMN</name>
        <dbReference type="ChEBI" id="CHEBI:58210"/>
    </ligand>
</feature>
<feature type="binding site" evidence="1">
    <location>
        <begin position="111"/>
        <end position="115"/>
    </location>
    <ligand>
        <name>substrate</name>
    </ligand>
</feature>
<feature type="binding site" evidence="1">
    <location>
        <position position="139"/>
    </location>
    <ligand>
        <name>FMN</name>
        <dbReference type="ChEBI" id="CHEBI:58210"/>
    </ligand>
</feature>
<feature type="binding site" evidence="1">
    <location>
        <position position="172"/>
    </location>
    <ligand>
        <name>FMN</name>
        <dbReference type="ChEBI" id="CHEBI:58210"/>
    </ligand>
</feature>
<feature type="binding site" evidence="1">
    <location>
        <position position="172"/>
    </location>
    <ligand>
        <name>substrate</name>
    </ligand>
</feature>
<feature type="binding site" evidence="1">
    <location>
        <position position="177"/>
    </location>
    <ligand>
        <name>substrate</name>
    </ligand>
</feature>
<feature type="binding site" evidence="1">
    <location>
        <position position="217"/>
    </location>
    <ligand>
        <name>FMN</name>
        <dbReference type="ChEBI" id="CHEBI:58210"/>
    </ligand>
</feature>
<feature type="binding site" evidence="1">
    <location>
        <position position="245"/>
    </location>
    <ligand>
        <name>FMN</name>
        <dbReference type="ChEBI" id="CHEBI:58210"/>
    </ligand>
</feature>
<feature type="binding site" evidence="1">
    <location>
        <begin position="246"/>
        <end position="247"/>
    </location>
    <ligand>
        <name>substrate</name>
    </ligand>
</feature>
<feature type="binding site" evidence="1">
    <location>
        <position position="268"/>
    </location>
    <ligand>
        <name>FMN</name>
        <dbReference type="ChEBI" id="CHEBI:58210"/>
    </ligand>
</feature>
<feature type="binding site" evidence="1">
    <location>
        <position position="297"/>
    </location>
    <ligand>
        <name>FMN</name>
        <dbReference type="ChEBI" id="CHEBI:58210"/>
    </ligand>
</feature>
<feature type="binding site" evidence="1">
    <location>
        <begin position="318"/>
        <end position="319"/>
    </location>
    <ligand>
        <name>FMN</name>
        <dbReference type="ChEBI" id="CHEBI:58210"/>
    </ligand>
</feature>
<name>PYRD_SALTI</name>
<dbReference type="EC" id="1.3.5.2" evidence="1"/>
<dbReference type="EMBL" id="AL513382">
    <property type="protein sequence ID" value="CAD08184.1"/>
    <property type="molecule type" value="Genomic_DNA"/>
</dbReference>
<dbReference type="EMBL" id="AE014613">
    <property type="protein sequence ID" value="AAO69480.1"/>
    <property type="molecule type" value="Genomic_DNA"/>
</dbReference>
<dbReference type="RefSeq" id="NP_455556.1">
    <property type="nucleotide sequence ID" value="NC_003198.1"/>
</dbReference>
<dbReference type="RefSeq" id="WP_000291724.1">
    <property type="nucleotide sequence ID" value="NZ_WSUR01000013.1"/>
</dbReference>
<dbReference type="SMR" id="Q8Z7S9"/>
<dbReference type="STRING" id="220341.gene:17585062"/>
<dbReference type="KEGG" id="stt:t1862"/>
<dbReference type="KEGG" id="sty:STY1079"/>
<dbReference type="PATRIC" id="fig|220341.7.peg.1087"/>
<dbReference type="eggNOG" id="COG0167">
    <property type="taxonomic scope" value="Bacteria"/>
</dbReference>
<dbReference type="HOGENOM" id="CLU_013640_2_0_6"/>
<dbReference type="OMA" id="ERIKMGA"/>
<dbReference type="OrthoDB" id="9802377at2"/>
<dbReference type="UniPathway" id="UPA00070">
    <property type="reaction ID" value="UER00946"/>
</dbReference>
<dbReference type="Proteomes" id="UP000000541">
    <property type="component" value="Chromosome"/>
</dbReference>
<dbReference type="Proteomes" id="UP000002670">
    <property type="component" value="Chromosome"/>
</dbReference>
<dbReference type="GO" id="GO:0005737">
    <property type="term" value="C:cytoplasm"/>
    <property type="evidence" value="ECO:0007669"/>
    <property type="project" value="InterPro"/>
</dbReference>
<dbReference type="GO" id="GO:0005886">
    <property type="term" value="C:plasma membrane"/>
    <property type="evidence" value="ECO:0007669"/>
    <property type="project" value="UniProtKB-SubCell"/>
</dbReference>
<dbReference type="GO" id="GO:0106430">
    <property type="term" value="F:dihydroorotate dehydrogenase (quinone) activity"/>
    <property type="evidence" value="ECO:0007669"/>
    <property type="project" value="UniProtKB-EC"/>
</dbReference>
<dbReference type="GO" id="GO:0006207">
    <property type="term" value="P:'de novo' pyrimidine nucleobase biosynthetic process"/>
    <property type="evidence" value="ECO:0007669"/>
    <property type="project" value="InterPro"/>
</dbReference>
<dbReference type="GO" id="GO:0044205">
    <property type="term" value="P:'de novo' UMP biosynthetic process"/>
    <property type="evidence" value="ECO:0007669"/>
    <property type="project" value="UniProtKB-UniRule"/>
</dbReference>
<dbReference type="CDD" id="cd04738">
    <property type="entry name" value="DHOD_2_like"/>
    <property type="match status" value="1"/>
</dbReference>
<dbReference type="FunFam" id="3.20.20.70:FF:000028">
    <property type="entry name" value="Dihydroorotate dehydrogenase (quinone)"/>
    <property type="match status" value="1"/>
</dbReference>
<dbReference type="Gene3D" id="3.20.20.70">
    <property type="entry name" value="Aldolase class I"/>
    <property type="match status" value="1"/>
</dbReference>
<dbReference type="HAMAP" id="MF_00225">
    <property type="entry name" value="DHO_dh_type2"/>
    <property type="match status" value="1"/>
</dbReference>
<dbReference type="InterPro" id="IPR013785">
    <property type="entry name" value="Aldolase_TIM"/>
</dbReference>
<dbReference type="InterPro" id="IPR050074">
    <property type="entry name" value="DHO_dehydrogenase"/>
</dbReference>
<dbReference type="InterPro" id="IPR012135">
    <property type="entry name" value="Dihydroorotate_DH_1_2"/>
</dbReference>
<dbReference type="InterPro" id="IPR005719">
    <property type="entry name" value="Dihydroorotate_DH_2"/>
</dbReference>
<dbReference type="InterPro" id="IPR005720">
    <property type="entry name" value="Dihydroorotate_DH_cat"/>
</dbReference>
<dbReference type="InterPro" id="IPR001295">
    <property type="entry name" value="Dihydroorotate_DH_CS"/>
</dbReference>
<dbReference type="NCBIfam" id="NF003644">
    <property type="entry name" value="PRK05286.1-1"/>
    <property type="match status" value="1"/>
</dbReference>
<dbReference type="NCBIfam" id="NF003645">
    <property type="entry name" value="PRK05286.1-2"/>
    <property type="match status" value="1"/>
</dbReference>
<dbReference type="NCBIfam" id="NF003646">
    <property type="entry name" value="PRK05286.1-4"/>
    <property type="match status" value="1"/>
</dbReference>
<dbReference type="NCBIfam" id="NF003652">
    <property type="entry name" value="PRK05286.2-5"/>
    <property type="match status" value="1"/>
</dbReference>
<dbReference type="NCBIfam" id="TIGR01036">
    <property type="entry name" value="pyrD_sub2"/>
    <property type="match status" value="1"/>
</dbReference>
<dbReference type="PANTHER" id="PTHR48109:SF4">
    <property type="entry name" value="DIHYDROOROTATE DEHYDROGENASE (QUINONE), MITOCHONDRIAL"/>
    <property type="match status" value="1"/>
</dbReference>
<dbReference type="PANTHER" id="PTHR48109">
    <property type="entry name" value="DIHYDROOROTATE DEHYDROGENASE (QUINONE), MITOCHONDRIAL-RELATED"/>
    <property type="match status" value="1"/>
</dbReference>
<dbReference type="Pfam" id="PF01180">
    <property type="entry name" value="DHO_dh"/>
    <property type="match status" value="1"/>
</dbReference>
<dbReference type="PIRSF" id="PIRSF000164">
    <property type="entry name" value="DHO_oxidase"/>
    <property type="match status" value="1"/>
</dbReference>
<dbReference type="SUPFAM" id="SSF51395">
    <property type="entry name" value="FMN-linked oxidoreductases"/>
    <property type="match status" value="1"/>
</dbReference>
<dbReference type="PROSITE" id="PS00911">
    <property type="entry name" value="DHODEHASE_1"/>
    <property type="match status" value="1"/>
</dbReference>
<dbReference type="PROSITE" id="PS00912">
    <property type="entry name" value="DHODEHASE_2"/>
    <property type="match status" value="1"/>
</dbReference>